<protein>
    <recommendedName>
        <fullName evidence="1">Protein-methionine-sulfoxide reductase catalytic subunit MsrP</fullName>
        <ecNumber evidence="1">1.8.5.-</ecNumber>
    </recommendedName>
</protein>
<proteinExistence type="inferred from homology"/>
<gene>
    <name evidence="1" type="primary">msrP</name>
    <name type="ordered locus">BMEII0305</name>
</gene>
<dbReference type="EC" id="1.8.5.-" evidence="1"/>
<dbReference type="EMBL" id="AE008918">
    <property type="protein sequence ID" value="AAL53547.1"/>
    <property type="molecule type" value="Genomic_DNA"/>
</dbReference>
<dbReference type="PIR" id="AH3547">
    <property type="entry name" value="AH3547"/>
</dbReference>
<dbReference type="RefSeq" id="WP_002965661.1">
    <property type="nucleotide sequence ID" value="NZ_GG703779.1"/>
</dbReference>
<dbReference type="SMR" id="P0A4R0"/>
<dbReference type="GeneID" id="97534956"/>
<dbReference type="KEGG" id="bme:BMEII0305"/>
<dbReference type="KEGG" id="bmel:DK63_2935"/>
<dbReference type="PATRIC" id="fig|224914.52.peg.3080"/>
<dbReference type="eggNOG" id="COG2041">
    <property type="taxonomic scope" value="Bacteria"/>
</dbReference>
<dbReference type="PhylomeDB" id="P0A4R0"/>
<dbReference type="Proteomes" id="UP000000419">
    <property type="component" value="Chromosome II"/>
</dbReference>
<dbReference type="GO" id="GO:0042597">
    <property type="term" value="C:periplasmic space"/>
    <property type="evidence" value="ECO:0007669"/>
    <property type="project" value="UniProtKB-SubCell"/>
</dbReference>
<dbReference type="GO" id="GO:0046872">
    <property type="term" value="F:metal ion binding"/>
    <property type="evidence" value="ECO:0007669"/>
    <property type="project" value="UniProtKB-KW"/>
</dbReference>
<dbReference type="GO" id="GO:0043546">
    <property type="term" value="F:molybdopterin cofactor binding"/>
    <property type="evidence" value="ECO:0007669"/>
    <property type="project" value="UniProtKB-UniRule"/>
</dbReference>
<dbReference type="GO" id="GO:0016672">
    <property type="term" value="F:oxidoreductase activity, acting on a sulfur group of donors, quinone or similar compound as acceptor"/>
    <property type="evidence" value="ECO:0007669"/>
    <property type="project" value="UniProtKB-UniRule"/>
</dbReference>
<dbReference type="GO" id="GO:0030091">
    <property type="term" value="P:protein repair"/>
    <property type="evidence" value="ECO:0007669"/>
    <property type="project" value="UniProtKB-UniRule"/>
</dbReference>
<dbReference type="CDD" id="cd02107">
    <property type="entry name" value="YedY_like_Moco"/>
    <property type="match status" value="1"/>
</dbReference>
<dbReference type="Gene3D" id="3.90.420.10">
    <property type="entry name" value="Oxidoreductase, molybdopterin-binding domain"/>
    <property type="match status" value="1"/>
</dbReference>
<dbReference type="HAMAP" id="MF_01206">
    <property type="entry name" value="MsrP"/>
    <property type="match status" value="1"/>
</dbReference>
<dbReference type="InterPro" id="IPR022867">
    <property type="entry name" value="MsrP"/>
</dbReference>
<dbReference type="InterPro" id="IPR000572">
    <property type="entry name" value="OxRdtase_Mopterin-bd_dom"/>
</dbReference>
<dbReference type="InterPro" id="IPR036374">
    <property type="entry name" value="OxRdtase_Mopterin-bd_sf"/>
</dbReference>
<dbReference type="InterPro" id="IPR006311">
    <property type="entry name" value="TAT_signal"/>
</dbReference>
<dbReference type="NCBIfam" id="NF003767">
    <property type="entry name" value="PRK05363.1"/>
    <property type="match status" value="1"/>
</dbReference>
<dbReference type="PANTHER" id="PTHR43032">
    <property type="entry name" value="PROTEIN-METHIONINE-SULFOXIDE REDUCTASE"/>
    <property type="match status" value="1"/>
</dbReference>
<dbReference type="PANTHER" id="PTHR43032:SF3">
    <property type="entry name" value="PROTEIN-METHIONINE-SULFOXIDE REDUCTASE CATALYTIC SUBUNIT MSRP"/>
    <property type="match status" value="1"/>
</dbReference>
<dbReference type="Pfam" id="PF00174">
    <property type="entry name" value="Oxidored_molyb"/>
    <property type="match status" value="1"/>
</dbReference>
<dbReference type="SUPFAM" id="SSF56524">
    <property type="entry name" value="Oxidoreductase molybdopterin-binding domain"/>
    <property type="match status" value="1"/>
</dbReference>
<dbReference type="PROSITE" id="PS51318">
    <property type="entry name" value="TAT"/>
    <property type="match status" value="1"/>
</dbReference>
<keyword id="KW-0479">Metal-binding</keyword>
<keyword id="KW-0500">Molybdenum</keyword>
<keyword id="KW-0560">Oxidoreductase</keyword>
<keyword id="KW-0574">Periplasm</keyword>
<keyword id="KW-0732">Signal</keyword>
<comment type="function">
    <text evidence="1">Part of the MsrPQ system that repairs oxidized periplasmic proteins containing methionine sulfoxide residues (Met-O), using respiratory chain electrons. Thus protects these proteins from oxidative-stress damage caused by reactive species of oxygen and chlorine generated by the host defense mechanisms. MsrPQ is essential for the maintenance of envelope integrity under bleach stress, rescuing a wide series of structurally unrelated periplasmic proteins from methionine oxidation. The catalytic subunit MsrP is non-stereospecific, being able to reduce both (R-) and (S-) diastereoisomers of methionine sulfoxide.</text>
</comment>
<comment type="catalytic activity">
    <reaction evidence="1">
        <text>L-methionyl-[protein] + a quinone + H2O = L-methionyl-(S)-S-oxide-[protein] + a quinol</text>
        <dbReference type="Rhea" id="RHEA:51292"/>
        <dbReference type="Rhea" id="RHEA-COMP:12313"/>
        <dbReference type="Rhea" id="RHEA-COMP:12315"/>
        <dbReference type="ChEBI" id="CHEBI:15377"/>
        <dbReference type="ChEBI" id="CHEBI:16044"/>
        <dbReference type="ChEBI" id="CHEBI:24646"/>
        <dbReference type="ChEBI" id="CHEBI:44120"/>
        <dbReference type="ChEBI" id="CHEBI:132124"/>
    </reaction>
</comment>
<comment type="catalytic activity">
    <reaction evidence="1">
        <text>L-methionyl-[protein] + a quinone + H2O = L-methionyl-(R)-S-oxide-[protein] + a quinol</text>
        <dbReference type="Rhea" id="RHEA:51296"/>
        <dbReference type="Rhea" id="RHEA-COMP:12313"/>
        <dbReference type="Rhea" id="RHEA-COMP:12314"/>
        <dbReference type="ChEBI" id="CHEBI:15377"/>
        <dbReference type="ChEBI" id="CHEBI:16044"/>
        <dbReference type="ChEBI" id="CHEBI:24646"/>
        <dbReference type="ChEBI" id="CHEBI:45764"/>
        <dbReference type="ChEBI" id="CHEBI:132124"/>
    </reaction>
</comment>
<comment type="cofactor">
    <cofactor evidence="1">
        <name>Mo-molybdopterin</name>
        <dbReference type="ChEBI" id="CHEBI:71302"/>
    </cofactor>
    <text evidence="1">Binds 1 Mo-molybdopterin (Mo-MPT) cofactor per subunit.</text>
</comment>
<comment type="subunit">
    <text evidence="1">Heterodimer of a catalytic subunit (MsrP) and a heme-binding subunit (MsrQ).</text>
</comment>
<comment type="subcellular location">
    <subcellularLocation>
        <location evidence="1">Periplasm</location>
    </subcellularLocation>
    <text evidence="1">Is attached to the inner membrane when interacting with the MsrQ subunit.</text>
</comment>
<comment type="PTM">
    <text evidence="1">Predicted to be exported by the Tat system. The position of the signal peptide cleavage has not been experimentally proven.</text>
</comment>
<comment type="similarity">
    <text evidence="1">Belongs to the MsrP family.</text>
</comment>
<organism>
    <name type="scientific">Brucella melitensis biotype 1 (strain ATCC 23456 / CCUG 17765 / NCTC 10094 / 16M)</name>
    <dbReference type="NCBI Taxonomy" id="224914"/>
    <lineage>
        <taxon>Bacteria</taxon>
        <taxon>Pseudomonadati</taxon>
        <taxon>Pseudomonadota</taxon>
        <taxon>Alphaproteobacteria</taxon>
        <taxon>Hyphomicrobiales</taxon>
        <taxon>Brucellaceae</taxon>
        <taxon>Brucella/Ochrobactrum group</taxon>
        <taxon>Brucella</taxon>
    </lineage>
</organism>
<sequence>MSSFKPSRFSTARLTGDAVTPKSIYLRRREFMIGLGAIAATGAASSAFADPLEAKTTAYKVDEKLTPQNAVTTYNNFYEFGTDKSDPSANSGSFKPLPWKLTVDGLVKQPKEFDVEELIAKMPLEERIYRMRCVEAWSMVIPWIGFPLSSLLSQVEPLGSAKYIAFTGVVRPDEMPGQTGLFQALNWPYVEGLRLDEAMHPLTILSVGLYGETLPNANGAPIRLVVPWKYGFKGIKAITRISFVEKQPPTSWNRQAANEYGFYANVNPAVDHPRWSQATERRIGEGGFFGSDRRPTLPFNGYGEEVASLYAGMDLKANY</sequence>
<evidence type="ECO:0000255" key="1">
    <source>
        <dbReference type="HAMAP-Rule" id="MF_01206"/>
    </source>
</evidence>
<accession>P0A4R0</accession>
<accession>Q8YD72</accession>
<name>MSRP_BRUME</name>
<reference key="1">
    <citation type="journal article" date="2002" name="Proc. Natl. Acad. Sci. U.S.A.">
        <title>The genome sequence of the facultative intracellular pathogen Brucella melitensis.</title>
        <authorList>
            <person name="DelVecchio V.G."/>
            <person name="Kapatral V."/>
            <person name="Redkar R.J."/>
            <person name="Patra G."/>
            <person name="Mujer C."/>
            <person name="Los T."/>
            <person name="Ivanova N."/>
            <person name="Anderson I."/>
            <person name="Bhattacharyya A."/>
            <person name="Lykidis A."/>
            <person name="Reznik G."/>
            <person name="Jablonski L."/>
            <person name="Larsen N."/>
            <person name="D'Souza M."/>
            <person name="Bernal A."/>
            <person name="Mazur M."/>
            <person name="Goltsman E."/>
            <person name="Selkov E."/>
            <person name="Elzer P.H."/>
            <person name="Hagius S."/>
            <person name="O'Callaghan D."/>
            <person name="Letesson J.-J."/>
            <person name="Haselkorn R."/>
            <person name="Kyrpides N.C."/>
            <person name="Overbeek R."/>
        </authorList>
    </citation>
    <scope>NUCLEOTIDE SEQUENCE [LARGE SCALE GENOMIC DNA]</scope>
    <source>
        <strain>ATCC 23456 / CCUG 17765 / NCTC 10094 / 16M</strain>
    </source>
</reference>
<feature type="signal peptide" description="Tat-type signal" evidence="1">
    <location>
        <begin position="1"/>
        <end position="54"/>
    </location>
</feature>
<feature type="chain" id="PRO_0000070676" description="Protein-methionine-sulfoxide reductase catalytic subunit MsrP" evidence="1">
    <location>
        <begin position="55"/>
        <end position="319"/>
    </location>
</feature>
<feature type="binding site" evidence="1">
    <location>
        <position position="75"/>
    </location>
    <ligand>
        <name>Mo-molybdopterin</name>
        <dbReference type="ChEBI" id="CHEBI:71302"/>
    </ligand>
</feature>
<feature type="binding site" evidence="1">
    <location>
        <begin position="78"/>
        <end position="79"/>
    </location>
    <ligand>
        <name>Mo-molybdopterin</name>
        <dbReference type="ChEBI" id="CHEBI:71302"/>
    </ligand>
</feature>
<feature type="binding site" evidence="1">
    <location>
        <position position="133"/>
    </location>
    <ligand>
        <name>Mo-molybdopterin</name>
        <dbReference type="ChEBI" id="CHEBI:71302"/>
    </ligand>
    <ligandPart>
        <name>Mo</name>
        <dbReference type="ChEBI" id="CHEBI:28685"/>
    </ligandPart>
</feature>
<feature type="binding site" evidence="1">
    <location>
        <position position="218"/>
    </location>
    <ligand>
        <name>Mo-molybdopterin</name>
        <dbReference type="ChEBI" id="CHEBI:71302"/>
    </ligand>
</feature>
<feature type="binding site" evidence="1">
    <location>
        <position position="223"/>
    </location>
    <ligand>
        <name>Mo-molybdopterin</name>
        <dbReference type="ChEBI" id="CHEBI:71302"/>
    </ligand>
</feature>
<feature type="binding site" evidence="1">
    <location>
        <begin position="234"/>
        <end position="236"/>
    </location>
    <ligand>
        <name>Mo-molybdopterin</name>
        <dbReference type="ChEBI" id="CHEBI:71302"/>
    </ligand>
</feature>